<proteinExistence type="inferred from homology"/>
<evidence type="ECO:0000250" key="1">
    <source>
        <dbReference type="UniProtKB" id="A1L3X0"/>
    </source>
</evidence>
<evidence type="ECO:0000250" key="2">
    <source>
        <dbReference type="UniProtKB" id="Q57UP6"/>
    </source>
</evidence>
<evidence type="ECO:0000255" key="3"/>
<evidence type="ECO:0000255" key="4">
    <source>
        <dbReference type="RuleBase" id="RU361115"/>
    </source>
</evidence>
<evidence type="ECO:0000269" key="5">
    <source>
    </source>
</evidence>
<evidence type="ECO:0000303" key="6">
    <source>
    </source>
</evidence>
<evidence type="ECO:0000305" key="7"/>
<evidence type="ECO:0000312" key="8">
    <source>
        <dbReference type="EMBL" id="EAN92119.1"/>
    </source>
</evidence>
<evidence type="ECO:0000312" key="9">
    <source>
        <dbReference type="Proteomes" id="UP000002296"/>
    </source>
</evidence>
<feature type="chain" id="PRO_0000459370" description="Fatty acid elongase 3">
    <location>
        <begin position="1"/>
        <end position="300"/>
    </location>
</feature>
<feature type="transmembrane region" description="Helical" evidence="3">
    <location>
        <begin position="31"/>
        <end position="51"/>
    </location>
</feature>
<feature type="transmembrane region" description="Helical" evidence="3">
    <location>
        <begin position="61"/>
        <end position="81"/>
    </location>
</feature>
<feature type="transmembrane region" description="Helical" evidence="3">
    <location>
        <begin position="127"/>
        <end position="147"/>
    </location>
</feature>
<feature type="transmembrane region" description="Helical" evidence="3">
    <location>
        <begin position="170"/>
        <end position="190"/>
    </location>
</feature>
<feature type="transmembrane region" description="Helical" evidence="3">
    <location>
        <begin position="192"/>
        <end position="212"/>
    </location>
</feature>
<feature type="transmembrane region" description="Helical" evidence="3">
    <location>
        <begin position="219"/>
        <end position="239"/>
    </location>
</feature>
<feature type="transmembrane region" description="Helical" evidence="3">
    <location>
        <begin position="261"/>
        <end position="283"/>
    </location>
</feature>
<feature type="short sequence motif" description="HxxHH motif" evidence="2">
    <location>
        <begin position="165"/>
        <end position="169"/>
    </location>
</feature>
<feature type="active site" description="Nucleophile" evidence="1">
    <location>
        <position position="168"/>
    </location>
</feature>
<sequence length="300" mass="34754">MAIAWMDSYTRWAADFRGEHLRSWMRDHTEVPAVAVVLYLILVLYVPENVMAHRNPIKLRFLNMLWNLLLTVFSICGAYYCLPRLWEVLTSPRISGLMADPNLGPNAPPPKLPGSFYNSACAWNDKIFFDGFVGLWVAAFVLSKIPEMIDTVFLVFQKKPVIFLHWYHHATVMLFCWHAYAYTISSGLWFATMNYCVHSIMYFYYFMCACGMRKVIRPIAPLITMMQILQMVAGTLIVLYTYVKKQFMGEFCAVNNPSLRMGLLMYVSYLFLFSQLYYRSYISPAAARTLRMANGEKKGK</sequence>
<comment type="function">
    <text evidence="5">Involved in the synthesis of fatty acids (PubMed:37061002). Elongates C14 fatty acids to C18 (PubMed:37061002). Required for the maintenance of the global lipidome profile in this parasite (PubMed:37061002).</text>
</comment>
<comment type="catalytic activity">
    <reaction evidence="2">
        <text>an acyl-CoA + malonyl-CoA + H(+) = a 3-oxoacyl-CoA + CO2 + CoA</text>
        <dbReference type="Rhea" id="RHEA:50252"/>
        <dbReference type="ChEBI" id="CHEBI:15378"/>
        <dbReference type="ChEBI" id="CHEBI:16526"/>
        <dbReference type="ChEBI" id="CHEBI:57287"/>
        <dbReference type="ChEBI" id="CHEBI:57384"/>
        <dbReference type="ChEBI" id="CHEBI:58342"/>
        <dbReference type="ChEBI" id="CHEBI:90726"/>
    </reaction>
    <physiologicalReaction direction="left-to-right" evidence="2">
        <dbReference type="Rhea" id="RHEA:50253"/>
    </physiologicalReaction>
</comment>
<comment type="pathway">
    <text evidence="7">Lipid metabolism; fatty acid biosynthesis.</text>
</comment>
<comment type="subcellular location">
    <subcellularLocation>
        <location evidence="5">Endoplasmic reticulum membrane</location>
        <topology evidence="3">Multi-pass membrane protein</topology>
    </subcellularLocation>
</comment>
<comment type="similarity">
    <text evidence="7">Belongs to the ELO family.</text>
</comment>
<dbReference type="EC" id="2.3.1.-" evidence="2"/>
<dbReference type="EMBL" id="AAHK01000461">
    <property type="protein sequence ID" value="EAN92119.1"/>
    <property type="molecule type" value="Genomic_DNA"/>
</dbReference>
<dbReference type="RefSeq" id="XP_813970.1">
    <property type="nucleotide sequence ID" value="XM_808877.1"/>
</dbReference>
<dbReference type="SMR" id="Q4DHY3"/>
<dbReference type="FunCoup" id="Q4DHY3">
    <property type="interactions" value="295"/>
</dbReference>
<dbReference type="STRING" id="353153.Q4DHY3"/>
<dbReference type="PaxDb" id="353153-Q4DHY3"/>
<dbReference type="EnsemblProtists" id="EAN92119">
    <property type="protein sequence ID" value="EAN92119"/>
    <property type="gene ID" value="Tc00.1047053506661.10"/>
</dbReference>
<dbReference type="GeneID" id="3545439"/>
<dbReference type="KEGG" id="tcr:506661.10"/>
<dbReference type="eggNOG" id="KOG3072">
    <property type="taxonomic scope" value="Eukaryota"/>
</dbReference>
<dbReference type="InParanoid" id="Q4DHY3"/>
<dbReference type="OMA" id="FGVHAIM"/>
<dbReference type="UniPathway" id="UPA00094"/>
<dbReference type="Proteomes" id="UP000002296">
    <property type="component" value="Unassembled WGS sequence"/>
</dbReference>
<dbReference type="GO" id="GO:0005789">
    <property type="term" value="C:endoplasmic reticulum membrane"/>
    <property type="evidence" value="ECO:0007669"/>
    <property type="project" value="UniProtKB-SubCell"/>
</dbReference>
<dbReference type="GO" id="GO:0009922">
    <property type="term" value="F:fatty acid elongase activity"/>
    <property type="evidence" value="ECO:0007669"/>
    <property type="project" value="UniProtKB-EC"/>
</dbReference>
<dbReference type="GO" id="GO:0034625">
    <property type="term" value="P:fatty acid elongation, monounsaturated fatty acid"/>
    <property type="evidence" value="ECO:0007669"/>
    <property type="project" value="TreeGrafter"/>
</dbReference>
<dbReference type="GO" id="GO:0034626">
    <property type="term" value="P:fatty acid elongation, polyunsaturated fatty acid"/>
    <property type="evidence" value="ECO:0007669"/>
    <property type="project" value="TreeGrafter"/>
</dbReference>
<dbReference type="GO" id="GO:0019367">
    <property type="term" value="P:fatty acid elongation, saturated fatty acid"/>
    <property type="evidence" value="ECO:0007669"/>
    <property type="project" value="TreeGrafter"/>
</dbReference>
<dbReference type="GO" id="GO:0030148">
    <property type="term" value="P:sphingolipid biosynthetic process"/>
    <property type="evidence" value="ECO:0007669"/>
    <property type="project" value="TreeGrafter"/>
</dbReference>
<dbReference type="GO" id="GO:0042761">
    <property type="term" value="P:very long-chain fatty acid biosynthetic process"/>
    <property type="evidence" value="ECO:0007669"/>
    <property type="project" value="TreeGrafter"/>
</dbReference>
<dbReference type="InterPro" id="IPR030457">
    <property type="entry name" value="ELO_CS"/>
</dbReference>
<dbReference type="InterPro" id="IPR002076">
    <property type="entry name" value="ELO_fam"/>
</dbReference>
<dbReference type="PANTHER" id="PTHR11157:SF17">
    <property type="entry name" value="ELONGATION OF VERY LONG CHAIN FATTY ACIDS PROTEIN 6"/>
    <property type="match status" value="1"/>
</dbReference>
<dbReference type="PANTHER" id="PTHR11157">
    <property type="entry name" value="FATTY ACID ACYL TRANSFERASE-RELATED"/>
    <property type="match status" value="1"/>
</dbReference>
<dbReference type="Pfam" id="PF01151">
    <property type="entry name" value="ELO"/>
    <property type="match status" value="1"/>
</dbReference>
<dbReference type="PROSITE" id="PS01188">
    <property type="entry name" value="ELO"/>
    <property type="match status" value="1"/>
</dbReference>
<gene>
    <name evidence="6" type="primary">ELO3</name>
    <name evidence="8" type="ORF">Tc00.1047053506661.10</name>
</gene>
<name>ELO3_TRYCC</name>
<reference evidence="9" key="1">
    <citation type="journal article" date="2005" name="Science">
        <title>The genome sequence of Trypanosoma cruzi, etiologic agent of Chagas disease.</title>
        <authorList>
            <person name="El-Sayed N.M.A."/>
            <person name="Myler P.J."/>
            <person name="Bartholomeu D.C."/>
            <person name="Nilsson D."/>
            <person name="Aggarwal G."/>
            <person name="Tran A.-N."/>
            <person name="Ghedin E."/>
            <person name="Worthey E.A."/>
            <person name="Delcher A.L."/>
            <person name="Blandin G."/>
            <person name="Westenberger S.J."/>
            <person name="Caler E."/>
            <person name="Cerqueira G.C."/>
            <person name="Branche C."/>
            <person name="Haas B."/>
            <person name="Anupama A."/>
            <person name="Arner E."/>
            <person name="Aslund L."/>
            <person name="Attipoe P."/>
            <person name="Bontempi E."/>
            <person name="Bringaud F."/>
            <person name="Burton P."/>
            <person name="Cadag E."/>
            <person name="Campbell D.A."/>
            <person name="Carrington M."/>
            <person name="Crabtree J."/>
            <person name="Darban H."/>
            <person name="da Silveira J.F."/>
            <person name="de Jong P."/>
            <person name="Edwards K."/>
            <person name="Englund P.T."/>
            <person name="Fazelina G."/>
            <person name="Feldblyum T."/>
            <person name="Ferella M."/>
            <person name="Frasch A.C."/>
            <person name="Gull K."/>
            <person name="Horn D."/>
            <person name="Hou L."/>
            <person name="Huang Y."/>
            <person name="Kindlund E."/>
            <person name="Klingbeil M."/>
            <person name="Kluge S."/>
            <person name="Koo H."/>
            <person name="Lacerda D."/>
            <person name="Levin M.J."/>
            <person name="Lorenzi H."/>
            <person name="Louie T."/>
            <person name="Machado C.R."/>
            <person name="McCulloch R."/>
            <person name="McKenna A."/>
            <person name="Mizuno Y."/>
            <person name="Mottram J.C."/>
            <person name="Nelson S."/>
            <person name="Ochaya S."/>
            <person name="Osoegawa K."/>
            <person name="Pai G."/>
            <person name="Parsons M."/>
            <person name="Pentony M."/>
            <person name="Pettersson U."/>
            <person name="Pop M."/>
            <person name="Ramirez J.L."/>
            <person name="Rinta J."/>
            <person name="Robertson L."/>
            <person name="Salzberg S.L."/>
            <person name="Sanchez D.O."/>
            <person name="Seyler A."/>
            <person name="Sharma R."/>
            <person name="Shetty J."/>
            <person name="Simpson A.J."/>
            <person name="Sisk E."/>
            <person name="Tammi M.T."/>
            <person name="Tarleton R."/>
            <person name="Teixeira S."/>
            <person name="Van Aken S."/>
            <person name="Vogt C."/>
            <person name="Ward P.N."/>
            <person name="Wickstead B."/>
            <person name="Wortman J."/>
            <person name="White O."/>
            <person name="Fraser C.M."/>
            <person name="Stuart K.D."/>
            <person name="Andersson B."/>
        </authorList>
    </citation>
    <scope>NUCLEOTIDE SEQUENCE [LARGE SCALE GENOMIC DNA]</scope>
    <source>
        <strain evidence="9">CL Brener</strain>
    </source>
</reference>
<reference evidence="7" key="2">
    <citation type="journal article" date="2023" name="J. Biol. Chem.">
        <title>Fatty acid elongases 1-3 have distinct roles in mitochondrial function, growth, and lipid homeostasis in Trypanosoma cruzi.</title>
        <authorList>
            <person name="Pagura L."/>
            <person name="Dumoulin P.C."/>
            <person name="Ellis C.C."/>
            <person name="Mendes M.T."/>
            <person name="Estevao I.L."/>
            <person name="Almeida I.C."/>
            <person name="Burleigh B.A."/>
        </authorList>
    </citation>
    <scope>FUNCTION</scope>
    <scope>SUBCELLULAR LOCATION</scope>
</reference>
<organism evidence="9">
    <name type="scientific">Trypanosoma cruzi (strain CL Brener)</name>
    <dbReference type="NCBI Taxonomy" id="353153"/>
    <lineage>
        <taxon>Eukaryota</taxon>
        <taxon>Discoba</taxon>
        <taxon>Euglenozoa</taxon>
        <taxon>Kinetoplastea</taxon>
        <taxon>Metakinetoplastina</taxon>
        <taxon>Trypanosomatida</taxon>
        <taxon>Trypanosomatidae</taxon>
        <taxon>Trypanosoma</taxon>
        <taxon>Schizotrypanum</taxon>
    </lineage>
</organism>
<keyword id="KW-0256">Endoplasmic reticulum</keyword>
<keyword id="KW-0275">Fatty acid biosynthesis</keyword>
<keyword id="KW-0276">Fatty acid metabolism</keyword>
<keyword id="KW-0444">Lipid biosynthesis</keyword>
<keyword id="KW-0443">Lipid metabolism</keyword>
<keyword id="KW-0472">Membrane</keyword>
<keyword id="KW-1185">Reference proteome</keyword>
<keyword id="KW-0808">Transferase</keyword>
<keyword id="KW-0812">Transmembrane</keyword>
<keyword id="KW-1133">Transmembrane helix</keyword>
<protein>
    <recommendedName>
        <fullName evidence="6">Fatty acid elongase 3</fullName>
        <ecNumber evidence="2">2.3.1.-</ecNumber>
    </recommendedName>
    <alternativeName>
        <fullName evidence="6">Beta-ketoacyl-CoA synthase</fullName>
    </alternativeName>
    <alternativeName>
        <fullName evidence="4">Elongation of fatty acids protein</fullName>
    </alternativeName>
</protein>
<accession>Q4DHY3</accession>